<dbReference type="EMBL" id="CP000033">
    <property type="protein sequence ID" value="AAV42208.1"/>
    <property type="molecule type" value="Genomic_DNA"/>
</dbReference>
<dbReference type="RefSeq" id="YP_193239.1">
    <property type="nucleotide sequence ID" value="NC_006814.3"/>
</dbReference>
<dbReference type="SMR" id="Q5FM66"/>
<dbReference type="STRING" id="272621.LBA0316"/>
<dbReference type="KEGG" id="lac:LBA0316"/>
<dbReference type="PATRIC" id="fig|272621.13.peg.302"/>
<dbReference type="eggNOG" id="COG0100">
    <property type="taxonomic scope" value="Bacteria"/>
</dbReference>
<dbReference type="HOGENOM" id="CLU_072439_5_0_9"/>
<dbReference type="OrthoDB" id="9806415at2"/>
<dbReference type="BioCyc" id="LACI272621:G1G49-310-MONOMER"/>
<dbReference type="Proteomes" id="UP000006381">
    <property type="component" value="Chromosome"/>
</dbReference>
<dbReference type="GO" id="GO:1990904">
    <property type="term" value="C:ribonucleoprotein complex"/>
    <property type="evidence" value="ECO:0007669"/>
    <property type="project" value="UniProtKB-KW"/>
</dbReference>
<dbReference type="GO" id="GO:0005840">
    <property type="term" value="C:ribosome"/>
    <property type="evidence" value="ECO:0007669"/>
    <property type="project" value="UniProtKB-KW"/>
</dbReference>
<dbReference type="GO" id="GO:0019843">
    <property type="term" value="F:rRNA binding"/>
    <property type="evidence" value="ECO:0007669"/>
    <property type="project" value="UniProtKB-UniRule"/>
</dbReference>
<dbReference type="GO" id="GO:0003735">
    <property type="term" value="F:structural constituent of ribosome"/>
    <property type="evidence" value="ECO:0007669"/>
    <property type="project" value="InterPro"/>
</dbReference>
<dbReference type="GO" id="GO:0006412">
    <property type="term" value="P:translation"/>
    <property type="evidence" value="ECO:0007669"/>
    <property type="project" value="UniProtKB-UniRule"/>
</dbReference>
<dbReference type="FunFam" id="3.30.420.80:FF:000001">
    <property type="entry name" value="30S ribosomal protein S11"/>
    <property type="match status" value="1"/>
</dbReference>
<dbReference type="Gene3D" id="3.30.420.80">
    <property type="entry name" value="Ribosomal protein S11"/>
    <property type="match status" value="1"/>
</dbReference>
<dbReference type="HAMAP" id="MF_01310">
    <property type="entry name" value="Ribosomal_uS11"/>
    <property type="match status" value="1"/>
</dbReference>
<dbReference type="InterPro" id="IPR001971">
    <property type="entry name" value="Ribosomal_uS11"/>
</dbReference>
<dbReference type="InterPro" id="IPR019981">
    <property type="entry name" value="Ribosomal_uS11_bac-type"/>
</dbReference>
<dbReference type="InterPro" id="IPR018102">
    <property type="entry name" value="Ribosomal_uS11_CS"/>
</dbReference>
<dbReference type="InterPro" id="IPR036967">
    <property type="entry name" value="Ribosomal_uS11_sf"/>
</dbReference>
<dbReference type="NCBIfam" id="NF003698">
    <property type="entry name" value="PRK05309.1"/>
    <property type="match status" value="1"/>
</dbReference>
<dbReference type="NCBIfam" id="TIGR03632">
    <property type="entry name" value="uS11_bact"/>
    <property type="match status" value="1"/>
</dbReference>
<dbReference type="PANTHER" id="PTHR11759">
    <property type="entry name" value="40S RIBOSOMAL PROTEIN S14/30S RIBOSOMAL PROTEIN S11"/>
    <property type="match status" value="1"/>
</dbReference>
<dbReference type="Pfam" id="PF00411">
    <property type="entry name" value="Ribosomal_S11"/>
    <property type="match status" value="1"/>
</dbReference>
<dbReference type="PIRSF" id="PIRSF002131">
    <property type="entry name" value="Ribosomal_S11"/>
    <property type="match status" value="1"/>
</dbReference>
<dbReference type="SUPFAM" id="SSF53137">
    <property type="entry name" value="Translational machinery components"/>
    <property type="match status" value="1"/>
</dbReference>
<dbReference type="PROSITE" id="PS00054">
    <property type="entry name" value="RIBOSOMAL_S11"/>
    <property type="match status" value="1"/>
</dbReference>
<accession>Q5FM66</accession>
<proteinExistence type="inferred from homology"/>
<comment type="function">
    <text evidence="1">Located on the platform of the 30S subunit, it bridges several disparate RNA helices of the 16S rRNA. Forms part of the Shine-Dalgarno cleft in the 70S ribosome.</text>
</comment>
<comment type="subunit">
    <text evidence="1">Part of the 30S ribosomal subunit. Interacts with proteins S7 and S18. Binds to IF-3.</text>
</comment>
<comment type="similarity">
    <text evidence="1">Belongs to the universal ribosomal protein uS11 family.</text>
</comment>
<organism>
    <name type="scientific">Lactobacillus acidophilus (strain ATCC 700396 / NCK56 / N2 / NCFM)</name>
    <dbReference type="NCBI Taxonomy" id="272621"/>
    <lineage>
        <taxon>Bacteria</taxon>
        <taxon>Bacillati</taxon>
        <taxon>Bacillota</taxon>
        <taxon>Bacilli</taxon>
        <taxon>Lactobacillales</taxon>
        <taxon>Lactobacillaceae</taxon>
        <taxon>Lactobacillus</taxon>
    </lineage>
</organism>
<name>RS11_LACAC</name>
<gene>
    <name evidence="1" type="primary">rpsK</name>
    <name type="ordered locus">LBA0316</name>
</gene>
<feature type="chain" id="PRO_0000230406" description="Small ribosomal subunit protein uS11">
    <location>
        <begin position="1"/>
        <end position="130"/>
    </location>
</feature>
<feature type="region of interest" description="Disordered" evidence="2">
    <location>
        <begin position="111"/>
        <end position="130"/>
    </location>
</feature>
<protein>
    <recommendedName>
        <fullName evidence="1">Small ribosomal subunit protein uS11</fullName>
    </recommendedName>
    <alternativeName>
        <fullName evidence="3">30S ribosomal protein S11</fullName>
    </alternativeName>
</protein>
<reference key="1">
    <citation type="journal article" date="2005" name="Proc. Natl. Acad. Sci. U.S.A.">
        <title>Complete genome sequence of the probiotic lactic acid bacterium Lactobacillus acidophilus NCFM.</title>
        <authorList>
            <person name="Altermann E."/>
            <person name="Russell W.M."/>
            <person name="Azcarate-Peril M.A."/>
            <person name="Barrangou R."/>
            <person name="Buck B.L."/>
            <person name="McAuliffe O."/>
            <person name="Souther N."/>
            <person name="Dobson A."/>
            <person name="Duong T."/>
            <person name="Callanan M."/>
            <person name="Lick S."/>
            <person name="Hamrick A."/>
            <person name="Cano R."/>
            <person name="Klaenhammer T.R."/>
        </authorList>
    </citation>
    <scope>NUCLEOTIDE SEQUENCE [LARGE SCALE GENOMIC DNA]</scope>
    <source>
        <strain>ATCC 700396 / NCK56 / N2 / NCFM</strain>
    </source>
</reference>
<sequence>MMPAKKTARKRRVKKHVESGVAHIHSTFNNTLVMITDVQGNAVAWSSAGALGFKGSRKSTPFAAQMAAEAAAKSAMDQGMKHVEVSVKGPGAGRESAIRSLQATGLEITAIRDVTPVPHNGSRPPKRRRA</sequence>
<evidence type="ECO:0000255" key="1">
    <source>
        <dbReference type="HAMAP-Rule" id="MF_01310"/>
    </source>
</evidence>
<evidence type="ECO:0000256" key="2">
    <source>
        <dbReference type="SAM" id="MobiDB-lite"/>
    </source>
</evidence>
<evidence type="ECO:0000305" key="3"/>
<keyword id="KW-1185">Reference proteome</keyword>
<keyword id="KW-0687">Ribonucleoprotein</keyword>
<keyword id="KW-0689">Ribosomal protein</keyword>
<keyword id="KW-0694">RNA-binding</keyword>
<keyword id="KW-0699">rRNA-binding</keyword>